<gene>
    <name evidence="1" type="primary">rnpA</name>
    <name type="ordered locus">GWCH70_3433</name>
</gene>
<comment type="function">
    <text evidence="1">RNaseP catalyzes the removal of the 5'-leader sequence from pre-tRNA to produce the mature 5'-terminus. It can also cleave other RNA substrates such as 4.5S RNA. The protein component plays an auxiliary but essential role in vivo by binding to the 5'-leader sequence and broadening the substrate specificity of the ribozyme.</text>
</comment>
<comment type="catalytic activity">
    <reaction evidence="1">
        <text>Endonucleolytic cleavage of RNA, removing 5'-extranucleotides from tRNA precursor.</text>
        <dbReference type="EC" id="3.1.26.5"/>
    </reaction>
</comment>
<comment type="subunit">
    <text evidence="1">Consists of a catalytic RNA component (M1 or rnpB) and a protein subunit.</text>
</comment>
<comment type="similarity">
    <text evidence="1">Belongs to the RnpA family.</text>
</comment>
<sequence length="116" mass="13941">MKKKYRIKKNKEFQEVFQRGTSMANRQFVIYMLDRPEQPYFRIGLSVSKKLGKAVVRNRIKRYIRQVFLEMKDDIMPQKDYVIIARLPVAEMTYFEVKKSLLHVLRKAGALKRDIK</sequence>
<keyword id="KW-0255">Endonuclease</keyword>
<keyword id="KW-0378">Hydrolase</keyword>
<keyword id="KW-0540">Nuclease</keyword>
<keyword id="KW-0694">RNA-binding</keyword>
<keyword id="KW-0819">tRNA processing</keyword>
<protein>
    <recommendedName>
        <fullName evidence="1">Ribonuclease P protein component</fullName>
        <shortName evidence="1">RNase P protein</shortName>
        <shortName evidence="1">RNaseP protein</shortName>
        <ecNumber evidence="1">3.1.26.5</ecNumber>
    </recommendedName>
    <alternativeName>
        <fullName evidence="1">Protein C5</fullName>
    </alternativeName>
</protein>
<proteinExistence type="inferred from homology"/>
<evidence type="ECO:0000255" key="1">
    <source>
        <dbReference type="HAMAP-Rule" id="MF_00227"/>
    </source>
</evidence>
<organism>
    <name type="scientific">Geobacillus sp. (strain WCH70)</name>
    <dbReference type="NCBI Taxonomy" id="471223"/>
    <lineage>
        <taxon>Bacteria</taxon>
        <taxon>Bacillati</taxon>
        <taxon>Bacillota</taxon>
        <taxon>Bacilli</taxon>
        <taxon>Bacillales</taxon>
        <taxon>Anoxybacillaceae</taxon>
        <taxon>Geobacillus</taxon>
    </lineage>
</organism>
<feature type="chain" id="PRO_1000204348" description="Ribonuclease P protein component">
    <location>
        <begin position="1"/>
        <end position="116"/>
    </location>
</feature>
<accession>C5D9Z1</accession>
<dbReference type="EC" id="3.1.26.5" evidence="1"/>
<dbReference type="EMBL" id="CP001638">
    <property type="protein sequence ID" value="ACS26069.1"/>
    <property type="molecule type" value="Genomic_DNA"/>
</dbReference>
<dbReference type="SMR" id="C5D9Z1"/>
<dbReference type="STRING" id="471223.GWCH70_3433"/>
<dbReference type="KEGG" id="gwc:GWCH70_3433"/>
<dbReference type="eggNOG" id="COG0594">
    <property type="taxonomic scope" value="Bacteria"/>
</dbReference>
<dbReference type="HOGENOM" id="CLU_117179_9_1_9"/>
<dbReference type="OrthoDB" id="9810867at2"/>
<dbReference type="GO" id="GO:0030677">
    <property type="term" value="C:ribonuclease P complex"/>
    <property type="evidence" value="ECO:0007669"/>
    <property type="project" value="TreeGrafter"/>
</dbReference>
<dbReference type="GO" id="GO:0042781">
    <property type="term" value="F:3'-tRNA processing endoribonuclease activity"/>
    <property type="evidence" value="ECO:0007669"/>
    <property type="project" value="TreeGrafter"/>
</dbReference>
<dbReference type="GO" id="GO:0004526">
    <property type="term" value="F:ribonuclease P activity"/>
    <property type="evidence" value="ECO:0007669"/>
    <property type="project" value="UniProtKB-UniRule"/>
</dbReference>
<dbReference type="GO" id="GO:0000049">
    <property type="term" value="F:tRNA binding"/>
    <property type="evidence" value="ECO:0007669"/>
    <property type="project" value="UniProtKB-UniRule"/>
</dbReference>
<dbReference type="GO" id="GO:0001682">
    <property type="term" value="P:tRNA 5'-leader removal"/>
    <property type="evidence" value="ECO:0007669"/>
    <property type="project" value="UniProtKB-UniRule"/>
</dbReference>
<dbReference type="FunFam" id="3.30.230.10:FF:000021">
    <property type="entry name" value="Ribonuclease P protein component"/>
    <property type="match status" value="1"/>
</dbReference>
<dbReference type="Gene3D" id="3.30.230.10">
    <property type="match status" value="1"/>
</dbReference>
<dbReference type="HAMAP" id="MF_00227">
    <property type="entry name" value="RNase_P"/>
    <property type="match status" value="1"/>
</dbReference>
<dbReference type="InterPro" id="IPR020568">
    <property type="entry name" value="Ribosomal_Su5_D2-typ_SF"/>
</dbReference>
<dbReference type="InterPro" id="IPR014721">
    <property type="entry name" value="Ribsml_uS5_D2-typ_fold_subgr"/>
</dbReference>
<dbReference type="InterPro" id="IPR000100">
    <property type="entry name" value="RNase_P"/>
</dbReference>
<dbReference type="InterPro" id="IPR020539">
    <property type="entry name" value="RNase_P_CS"/>
</dbReference>
<dbReference type="NCBIfam" id="TIGR00188">
    <property type="entry name" value="rnpA"/>
    <property type="match status" value="1"/>
</dbReference>
<dbReference type="PANTHER" id="PTHR33992">
    <property type="entry name" value="RIBONUCLEASE P PROTEIN COMPONENT"/>
    <property type="match status" value="1"/>
</dbReference>
<dbReference type="PANTHER" id="PTHR33992:SF1">
    <property type="entry name" value="RIBONUCLEASE P PROTEIN COMPONENT"/>
    <property type="match status" value="1"/>
</dbReference>
<dbReference type="Pfam" id="PF00825">
    <property type="entry name" value="Ribonuclease_P"/>
    <property type="match status" value="1"/>
</dbReference>
<dbReference type="SUPFAM" id="SSF54211">
    <property type="entry name" value="Ribosomal protein S5 domain 2-like"/>
    <property type="match status" value="1"/>
</dbReference>
<dbReference type="PROSITE" id="PS00648">
    <property type="entry name" value="RIBONUCLEASE_P"/>
    <property type="match status" value="1"/>
</dbReference>
<name>RNPA_GEOSW</name>
<reference key="1">
    <citation type="submission" date="2009-06" db="EMBL/GenBank/DDBJ databases">
        <title>Complete sequence of chromosome of Geopacillus sp. WCH70.</title>
        <authorList>
            <consortium name="US DOE Joint Genome Institute"/>
            <person name="Lucas S."/>
            <person name="Copeland A."/>
            <person name="Lapidus A."/>
            <person name="Glavina del Rio T."/>
            <person name="Dalin E."/>
            <person name="Tice H."/>
            <person name="Bruce D."/>
            <person name="Goodwin L."/>
            <person name="Pitluck S."/>
            <person name="Chertkov O."/>
            <person name="Brettin T."/>
            <person name="Detter J.C."/>
            <person name="Han C."/>
            <person name="Larimer F."/>
            <person name="Land M."/>
            <person name="Hauser L."/>
            <person name="Kyrpides N."/>
            <person name="Mikhailova N."/>
            <person name="Brumm P."/>
            <person name="Mead D.A."/>
            <person name="Richardson P."/>
        </authorList>
    </citation>
    <scope>NUCLEOTIDE SEQUENCE [LARGE SCALE GENOMIC DNA]</scope>
    <source>
        <strain>WCH70</strain>
    </source>
</reference>